<evidence type="ECO:0000255" key="1"/>
<evidence type="ECO:0000269" key="2">
    <source>
    </source>
</evidence>
<evidence type="ECO:0000303" key="3">
    <source>
    </source>
</evidence>
<evidence type="ECO:0000305" key="4"/>
<proteinExistence type="evidence at protein level"/>
<accession>P85736</accession>
<dbReference type="GO" id="GO:0005576">
    <property type="term" value="C:extracellular region"/>
    <property type="evidence" value="ECO:0007669"/>
    <property type="project" value="UniProtKB-SubCell"/>
</dbReference>
<dbReference type="GO" id="GO:0007218">
    <property type="term" value="P:neuropeptide signaling pathway"/>
    <property type="evidence" value="ECO:0007669"/>
    <property type="project" value="UniProtKB-KW"/>
</dbReference>
<dbReference type="InterPro" id="IPR013231">
    <property type="entry name" value="Periviscerokinin"/>
</dbReference>
<dbReference type="Pfam" id="PF08259">
    <property type="entry name" value="Periviscerokin"/>
    <property type="match status" value="1"/>
</dbReference>
<keyword id="KW-0027">Amidation</keyword>
<keyword id="KW-0903">Direct protein sequencing</keyword>
<keyword id="KW-0527">Neuropeptide</keyword>
<keyword id="KW-0964">Secreted</keyword>
<comment type="function">
    <text evidence="4">Mediates visceral muscle contractile activity (myotropic activity).</text>
</comment>
<comment type="subcellular location">
    <subcellularLocation>
        <location evidence="4">Secreted</location>
    </subcellularLocation>
</comment>
<comment type="similarity">
    <text evidence="1">Belongs to the periviscerokinin family.</text>
</comment>
<sequence length="11" mass="1147">GSSGMIPFPRV</sequence>
<protein>
    <recommendedName>
        <fullName evidence="3">Periviscerokinin-3</fullName>
        <shortName evidence="3">PilDu-PVK-3</shortName>
    </recommendedName>
</protein>
<reference evidence="4" key="1">
    <citation type="journal article" date="2009" name="BMC Evol. Biol.">
        <title>A proteomic approach for studying insect phylogeny: CAPA peptides of ancient insect taxa (Dictyoptera, Blattoptera) as a test case.</title>
        <authorList>
            <person name="Roth S."/>
            <person name="Fromm B."/>
            <person name="Gaede G."/>
            <person name="Predel R."/>
        </authorList>
    </citation>
    <scope>PROTEIN SEQUENCE</scope>
    <scope>AMIDATION AT VAL-11</scope>
    <source>
        <tissue evidence="2">Abdominal perisympathetic organs</tissue>
    </source>
</reference>
<feature type="peptide" id="PRO_0000378850" description="Periviscerokinin-3" evidence="2">
    <location>
        <begin position="1"/>
        <end position="11"/>
    </location>
</feature>
<feature type="modified residue" description="Valine amide" evidence="2">
    <location>
        <position position="11"/>
    </location>
</feature>
<organism>
    <name type="scientific">Pilema dubia</name>
    <name type="common">Cockroach</name>
    <name type="synonym">Pilema reflexa</name>
    <dbReference type="NCBI Taxonomy" id="521525"/>
    <lineage>
        <taxon>Eukaryota</taxon>
        <taxon>Metazoa</taxon>
        <taxon>Ecdysozoa</taxon>
        <taxon>Arthropoda</taxon>
        <taxon>Hexapoda</taxon>
        <taxon>Insecta</taxon>
        <taxon>Pterygota</taxon>
        <taxon>Neoptera</taxon>
        <taxon>Polyneoptera</taxon>
        <taxon>Dictyoptera</taxon>
        <taxon>Blattodea</taxon>
        <taxon>Blaberoidea</taxon>
        <taxon>Blaberidae</taxon>
        <taxon>Perisphaerinae</taxon>
        <taxon>Pilema</taxon>
    </lineage>
</organism>
<name>PVK3_PILDU</name>